<gene>
    <name evidence="1" type="primary">ubiE</name>
    <name type="ordered locus">Reut_A0431</name>
</gene>
<comment type="function">
    <text evidence="1">Methyltransferase required for the conversion of demethylmenaquinol (DMKH2) to menaquinol (MKH2) and the conversion of 2-polyprenyl-6-methoxy-1,4-benzoquinol (DDMQH2) to 2-polyprenyl-3-methyl-6-methoxy-1,4-benzoquinol (DMQH2).</text>
</comment>
<comment type="catalytic activity">
    <reaction evidence="1">
        <text>a 2-demethylmenaquinol + S-adenosyl-L-methionine = a menaquinol + S-adenosyl-L-homocysteine + H(+)</text>
        <dbReference type="Rhea" id="RHEA:42640"/>
        <dbReference type="Rhea" id="RHEA-COMP:9539"/>
        <dbReference type="Rhea" id="RHEA-COMP:9563"/>
        <dbReference type="ChEBI" id="CHEBI:15378"/>
        <dbReference type="ChEBI" id="CHEBI:18151"/>
        <dbReference type="ChEBI" id="CHEBI:55437"/>
        <dbReference type="ChEBI" id="CHEBI:57856"/>
        <dbReference type="ChEBI" id="CHEBI:59789"/>
        <dbReference type="EC" id="2.1.1.163"/>
    </reaction>
</comment>
<comment type="catalytic activity">
    <reaction evidence="1">
        <text>a 2-methoxy-6-(all-trans-polyprenyl)benzene-1,4-diol + S-adenosyl-L-methionine = a 5-methoxy-2-methyl-3-(all-trans-polyprenyl)benzene-1,4-diol + S-adenosyl-L-homocysteine + H(+)</text>
        <dbReference type="Rhea" id="RHEA:28286"/>
        <dbReference type="Rhea" id="RHEA-COMP:10858"/>
        <dbReference type="Rhea" id="RHEA-COMP:10859"/>
        <dbReference type="ChEBI" id="CHEBI:15378"/>
        <dbReference type="ChEBI" id="CHEBI:57856"/>
        <dbReference type="ChEBI" id="CHEBI:59789"/>
        <dbReference type="ChEBI" id="CHEBI:84166"/>
        <dbReference type="ChEBI" id="CHEBI:84167"/>
        <dbReference type="EC" id="2.1.1.201"/>
    </reaction>
</comment>
<comment type="pathway">
    <text evidence="1">Quinol/quinone metabolism; menaquinone biosynthesis; menaquinol from 1,4-dihydroxy-2-naphthoate: step 2/2.</text>
</comment>
<comment type="pathway">
    <text evidence="1">Cofactor biosynthesis; ubiquinone biosynthesis.</text>
</comment>
<comment type="similarity">
    <text evidence="1">Belongs to the class I-like SAM-binding methyltransferase superfamily. MenG/UbiE family.</text>
</comment>
<proteinExistence type="inferred from homology"/>
<organism>
    <name type="scientific">Cupriavidus pinatubonensis (strain JMP 134 / LMG 1197)</name>
    <name type="common">Cupriavidus necator (strain JMP 134)</name>
    <dbReference type="NCBI Taxonomy" id="264198"/>
    <lineage>
        <taxon>Bacteria</taxon>
        <taxon>Pseudomonadati</taxon>
        <taxon>Pseudomonadota</taxon>
        <taxon>Betaproteobacteria</taxon>
        <taxon>Burkholderiales</taxon>
        <taxon>Burkholderiaceae</taxon>
        <taxon>Cupriavidus</taxon>
    </lineage>
</organism>
<reference key="1">
    <citation type="journal article" date="2010" name="PLoS ONE">
        <title>The complete multipartite genome sequence of Cupriavidus necator JMP134, a versatile pollutant degrader.</title>
        <authorList>
            <person name="Lykidis A."/>
            <person name="Perez-Pantoja D."/>
            <person name="Ledger T."/>
            <person name="Mavromatis K."/>
            <person name="Anderson I.J."/>
            <person name="Ivanova N.N."/>
            <person name="Hooper S.D."/>
            <person name="Lapidus A."/>
            <person name="Lucas S."/>
            <person name="Gonzalez B."/>
            <person name="Kyrpides N.C."/>
        </authorList>
    </citation>
    <scope>NUCLEOTIDE SEQUENCE [LARGE SCALE GENOMIC DNA]</scope>
    <source>
        <strain>JMP134 / LMG 1197</strain>
    </source>
</reference>
<name>UBIE_CUPPJ</name>
<feature type="chain" id="PRO_1000056281" description="Ubiquinone/menaquinone biosynthesis C-methyltransferase UbiE">
    <location>
        <begin position="1"/>
        <end position="243"/>
    </location>
</feature>
<feature type="binding site" evidence="1">
    <location>
        <position position="69"/>
    </location>
    <ligand>
        <name>S-adenosyl-L-methionine</name>
        <dbReference type="ChEBI" id="CHEBI:59789"/>
    </ligand>
</feature>
<feature type="binding site" evidence="1">
    <location>
        <position position="90"/>
    </location>
    <ligand>
        <name>S-adenosyl-L-methionine</name>
        <dbReference type="ChEBI" id="CHEBI:59789"/>
    </ligand>
</feature>
<feature type="binding site" evidence="1">
    <location>
        <begin position="116"/>
        <end position="117"/>
    </location>
    <ligand>
        <name>S-adenosyl-L-methionine</name>
        <dbReference type="ChEBI" id="CHEBI:59789"/>
    </ligand>
</feature>
<accession>Q475X0</accession>
<keyword id="KW-0474">Menaquinone biosynthesis</keyword>
<keyword id="KW-0489">Methyltransferase</keyword>
<keyword id="KW-0949">S-adenosyl-L-methionine</keyword>
<keyword id="KW-0808">Transferase</keyword>
<keyword id="KW-0831">Ubiquinone biosynthesis</keyword>
<sequence length="243" mass="27019">MSETHFGFEKVDETEKAGKVAGVFHSVASKYDVMNDLMSGGMHRLWKMFTIAQANVRPGHKVLDIAGGTGDLAKAFAKQAGPTGQVWLTDINESMLRVGRDRLLDKGVVTPVALCDAEHIPFPDNYFDLVTVAFGLRNMTHKDAALAEMRRVVKPGGKVMVLEFSKVWKPLEKAYDVYSFQVLPWLGQKVAGDAASYRYLAESIRMHPDQTSLVRLMEQVGLEKVEYFNLTAGVVALHVGRKY</sequence>
<protein>
    <recommendedName>
        <fullName evidence="1">Ubiquinone/menaquinone biosynthesis C-methyltransferase UbiE</fullName>
        <ecNumber evidence="1">2.1.1.163</ecNumber>
        <ecNumber evidence="1">2.1.1.201</ecNumber>
    </recommendedName>
    <alternativeName>
        <fullName evidence="1">2-methoxy-6-polyprenyl-1,4-benzoquinol methylase</fullName>
    </alternativeName>
    <alternativeName>
        <fullName evidence="1">Demethylmenaquinone methyltransferase</fullName>
    </alternativeName>
</protein>
<dbReference type="EC" id="2.1.1.163" evidence="1"/>
<dbReference type="EC" id="2.1.1.201" evidence="1"/>
<dbReference type="EMBL" id="CP000090">
    <property type="protein sequence ID" value="AAZ59813.1"/>
    <property type="molecule type" value="Genomic_DNA"/>
</dbReference>
<dbReference type="SMR" id="Q475X0"/>
<dbReference type="STRING" id="264198.Reut_A0431"/>
<dbReference type="KEGG" id="reu:Reut_A0431"/>
<dbReference type="eggNOG" id="COG2226">
    <property type="taxonomic scope" value="Bacteria"/>
</dbReference>
<dbReference type="HOGENOM" id="CLU_037990_0_0_4"/>
<dbReference type="OrthoDB" id="9808140at2"/>
<dbReference type="UniPathway" id="UPA00079">
    <property type="reaction ID" value="UER00169"/>
</dbReference>
<dbReference type="UniPathway" id="UPA00232"/>
<dbReference type="GO" id="GO:0008425">
    <property type="term" value="F:2-methoxy-6-polyprenyl-1,4-benzoquinol methyltransferase activity"/>
    <property type="evidence" value="ECO:0007669"/>
    <property type="project" value="UniProtKB-UniRule"/>
</dbReference>
<dbReference type="GO" id="GO:0043770">
    <property type="term" value="F:demethylmenaquinone methyltransferase activity"/>
    <property type="evidence" value="ECO:0007669"/>
    <property type="project" value="UniProtKB-UniRule"/>
</dbReference>
<dbReference type="GO" id="GO:0009060">
    <property type="term" value="P:aerobic respiration"/>
    <property type="evidence" value="ECO:0007669"/>
    <property type="project" value="UniProtKB-UniRule"/>
</dbReference>
<dbReference type="GO" id="GO:0009234">
    <property type="term" value="P:menaquinone biosynthetic process"/>
    <property type="evidence" value="ECO:0007669"/>
    <property type="project" value="UniProtKB-UniRule"/>
</dbReference>
<dbReference type="GO" id="GO:0032259">
    <property type="term" value="P:methylation"/>
    <property type="evidence" value="ECO:0007669"/>
    <property type="project" value="UniProtKB-KW"/>
</dbReference>
<dbReference type="CDD" id="cd02440">
    <property type="entry name" value="AdoMet_MTases"/>
    <property type="match status" value="1"/>
</dbReference>
<dbReference type="Gene3D" id="3.40.50.150">
    <property type="entry name" value="Vaccinia Virus protein VP39"/>
    <property type="match status" value="1"/>
</dbReference>
<dbReference type="HAMAP" id="MF_01813">
    <property type="entry name" value="MenG_UbiE_methyltr"/>
    <property type="match status" value="1"/>
</dbReference>
<dbReference type="InterPro" id="IPR029063">
    <property type="entry name" value="SAM-dependent_MTases_sf"/>
</dbReference>
<dbReference type="InterPro" id="IPR004033">
    <property type="entry name" value="UbiE/COQ5_MeTrFase"/>
</dbReference>
<dbReference type="InterPro" id="IPR023576">
    <property type="entry name" value="UbiE/COQ5_MeTrFase_CS"/>
</dbReference>
<dbReference type="NCBIfam" id="TIGR01934">
    <property type="entry name" value="MenG_MenH_UbiE"/>
    <property type="match status" value="1"/>
</dbReference>
<dbReference type="NCBIfam" id="NF001240">
    <property type="entry name" value="PRK00216.1-1"/>
    <property type="match status" value="1"/>
</dbReference>
<dbReference type="PANTHER" id="PTHR43591:SF24">
    <property type="entry name" value="2-METHOXY-6-POLYPRENYL-1,4-BENZOQUINOL METHYLASE, MITOCHONDRIAL"/>
    <property type="match status" value="1"/>
</dbReference>
<dbReference type="PANTHER" id="PTHR43591">
    <property type="entry name" value="METHYLTRANSFERASE"/>
    <property type="match status" value="1"/>
</dbReference>
<dbReference type="Pfam" id="PF01209">
    <property type="entry name" value="Ubie_methyltran"/>
    <property type="match status" value="1"/>
</dbReference>
<dbReference type="SUPFAM" id="SSF53335">
    <property type="entry name" value="S-adenosyl-L-methionine-dependent methyltransferases"/>
    <property type="match status" value="1"/>
</dbReference>
<dbReference type="PROSITE" id="PS51608">
    <property type="entry name" value="SAM_MT_UBIE"/>
    <property type="match status" value="1"/>
</dbReference>
<dbReference type="PROSITE" id="PS01183">
    <property type="entry name" value="UBIE_1"/>
    <property type="match status" value="1"/>
</dbReference>
<dbReference type="PROSITE" id="PS01184">
    <property type="entry name" value="UBIE_2"/>
    <property type="match status" value="1"/>
</dbReference>
<evidence type="ECO:0000255" key="1">
    <source>
        <dbReference type="HAMAP-Rule" id="MF_01813"/>
    </source>
</evidence>